<organism>
    <name type="scientific">Paracoccus denitrificans (strain Pd 1222)</name>
    <dbReference type="NCBI Taxonomy" id="318586"/>
    <lineage>
        <taxon>Bacteria</taxon>
        <taxon>Pseudomonadati</taxon>
        <taxon>Pseudomonadota</taxon>
        <taxon>Alphaproteobacteria</taxon>
        <taxon>Rhodobacterales</taxon>
        <taxon>Paracoccaceae</taxon>
        <taxon>Paracoccus</taxon>
    </lineage>
</organism>
<gene>
    <name evidence="1" type="primary">atpH</name>
    <name type="ordered locus">Pden_3815</name>
</gene>
<protein>
    <recommendedName>
        <fullName evidence="1">ATP synthase subunit delta</fullName>
    </recommendedName>
    <alternativeName>
        <fullName evidence="1">ATP synthase F(1) sector subunit delta</fullName>
    </alternativeName>
    <alternativeName>
        <fullName evidence="1">F-type ATPase subunit delta</fullName>
        <shortName evidence="1">F-ATPase subunit delta</shortName>
    </alternativeName>
</protein>
<name>ATPD_PARDP</name>
<proteinExistence type="evidence at protein level"/>
<keyword id="KW-0002">3D-structure</keyword>
<keyword id="KW-0066">ATP synthesis</keyword>
<keyword id="KW-0997">Cell inner membrane</keyword>
<keyword id="KW-1003">Cell membrane</keyword>
<keyword id="KW-0139">CF(1)</keyword>
<keyword id="KW-0375">Hydrogen ion transport</keyword>
<keyword id="KW-0406">Ion transport</keyword>
<keyword id="KW-0472">Membrane</keyword>
<keyword id="KW-1185">Reference proteome</keyword>
<keyword id="KW-0813">Transport</keyword>
<sequence>MTVANSASISADIAGRYAQALFDLVRDSGGIDALSSQIDDLASAYDASQDLRDLTLSPLYDRQQQEAAVGALSERMGLSAELANTLRLLARNRRLFTLPQFVAKLRNLIADAKGEVTADVVSAQALTDEQKARLADTLAAKSGKTVKLNARVDESLIGGMIVKLGSQMIDSSIRSKLASLQNAMKEVG</sequence>
<feature type="chain" id="PRO_0000371046" description="ATP synthase subunit delta">
    <location>
        <begin position="1"/>
        <end position="188"/>
    </location>
</feature>
<dbReference type="EMBL" id="CP000490">
    <property type="protein sequence ID" value="ABL71881.1"/>
    <property type="status" value="ALT_INIT"/>
    <property type="molecule type" value="Genomic_DNA"/>
</dbReference>
<dbReference type="PDB" id="5DN6">
    <property type="method" value="X-ray"/>
    <property type="resolution" value="3.98 A"/>
    <property type="chains" value="H=1-188"/>
</dbReference>
<dbReference type="PDBsum" id="5DN6"/>
<dbReference type="SMR" id="A1B8N7"/>
<dbReference type="STRING" id="318586.Pden_3815"/>
<dbReference type="TCDB" id="3.A.2.1.7">
    <property type="family name" value="the h+- or na+-translocating f-type, v-type and a-type atpase (f-atpase) superfamily"/>
</dbReference>
<dbReference type="EnsemblBacteria" id="ABL71881">
    <property type="protein sequence ID" value="ABL71881"/>
    <property type="gene ID" value="Pden_3815"/>
</dbReference>
<dbReference type="KEGG" id="pde:Pden_3815"/>
<dbReference type="eggNOG" id="COG0712">
    <property type="taxonomic scope" value="Bacteria"/>
</dbReference>
<dbReference type="HOGENOM" id="CLU_085114_0_1_5"/>
<dbReference type="OrthoDB" id="9796185at2"/>
<dbReference type="Proteomes" id="UP000000361">
    <property type="component" value="Chromosome 2"/>
</dbReference>
<dbReference type="GO" id="GO:0005886">
    <property type="term" value="C:plasma membrane"/>
    <property type="evidence" value="ECO:0007669"/>
    <property type="project" value="UniProtKB-SubCell"/>
</dbReference>
<dbReference type="GO" id="GO:0045259">
    <property type="term" value="C:proton-transporting ATP synthase complex"/>
    <property type="evidence" value="ECO:0007669"/>
    <property type="project" value="UniProtKB-KW"/>
</dbReference>
<dbReference type="GO" id="GO:0046933">
    <property type="term" value="F:proton-transporting ATP synthase activity, rotational mechanism"/>
    <property type="evidence" value="ECO:0007669"/>
    <property type="project" value="UniProtKB-UniRule"/>
</dbReference>
<dbReference type="DisProt" id="DP00806"/>
<dbReference type="Gene3D" id="1.10.520.20">
    <property type="entry name" value="N-terminal domain of the delta subunit of the F1F0-ATP synthase"/>
    <property type="match status" value="1"/>
</dbReference>
<dbReference type="HAMAP" id="MF_01416">
    <property type="entry name" value="ATP_synth_delta_bact"/>
    <property type="match status" value="1"/>
</dbReference>
<dbReference type="InterPro" id="IPR026015">
    <property type="entry name" value="ATP_synth_OSCP/delta_N_sf"/>
</dbReference>
<dbReference type="InterPro" id="IPR020781">
    <property type="entry name" value="ATPase_OSCP/d_CS"/>
</dbReference>
<dbReference type="InterPro" id="IPR000711">
    <property type="entry name" value="ATPase_OSCP/dsu"/>
</dbReference>
<dbReference type="NCBIfam" id="TIGR01145">
    <property type="entry name" value="ATP_synt_delta"/>
    <property type="match status" value="1"/>
</dbReference>
<dbReference type="NCBIfam" id="NF004406">
    <property type="entry name" value="PRK05758.3-2"/>
    <property type="match status" value="1"/>
</dbReference>
<dbReference type="PANTHER" id="PTHR11910">
    <property type="entry name" value="ATP SYNTHASE DELTA CHAIN"/>
    <property type="match status" value="1"/>
</dbReference>
<dbReference type="Pfam" id="PF00213">
    <property type="entry name" value="OSCP"/>
    <property type="match status" value="1"/>
</dbReference>
<dbReference type="PRINTS" id="PR00125">
    <property type="entry name" value="ATPASEDELTA"/>
</dbReference>
<dbReference type="SUPFAM" id="SSF47928">
    <property type="entry name" value="N-terminal domain of the delta subunit of the F1F0-ATP synthase"/>
    <property type="match status" value="1"/>
</dbReference>
<dbReference type="PROSITE" id="PS00389">
    <property type="entry name" value="ATPASE_DELTA"/>
    <property type="match status" value="1"/>
</dbReference>
<accession>A1B8N7</accession>
<comment type="function">
    <text evidence="1">F(1)F(0) ATP synthase produces ATP from ADP in the presence of a proton or sodium gradient. F-type ATPases consist of two structural domains, F(1) containing the extramembraneous catalytic core and F(0) containing the membrane proton channel, linked together by a central stalk and a peripheral stalk. During catalysis, ATP synthesis in the catalytic domain of F(1) is coupled via a rotary mechanism of the central stalk subunits to proton translocation.</text>
</comment>
<comment type="function">
    <text evidence="1">This protein is part of the stalk that links CF(0) to CF(1). It either transmits conformational changes from CF(0) to CF(1) or is implicated in proton conduction.</text>
</comment>
<comment type="subunit">
    <text evidence="1">F-type ATPases have 2 components, F(1) - the catalytic core - and F(0) - the membrane proton channel. F(1) has five subunits: alpha(3), beta(3), gamma(1), delta(1), epsilon(1). F(0) has three main subunits: a(1), b(2) and c(10-14). The alpha and beta chains form an alternating ring which encloses part of the gamma chain. F(1) is attached to F(0) by a central stalk formed by the gamma and epsilon chains, while a peripheral stalk is formed by the delta and b chains.</text>
</comment>
<comment type="subcellular location">
    <subcellularLocation>
        <location evidence="1">Cell inner membrane</location>
        <topology evidence="1">Peripheral membrane protein</topology>
    </subcellularLocation>
</comment>
<comment type="similarity">
    <text evidence="1">Belongs to the ATPase delta chain family.</text>
</comment>
<comment type="sequence caution" evidence="2">
    <conflict type="erroneous initiation">
        <sequence resource="EMBL-CDS" id="ABL71881"/>
    </conflict>
</comment>
<evidence type="ECO:0000255" key="1">
    <source>
        <dbReference type="HAMAP-Rule" id="MF_01416"/>
    </source>
</evidence>
<evidence type="ECO:0000305" key="2"/>
<reference key="1">
    <citation type="submission" date="2006-12" db="EMBL/GenBank/DDBJ databases">
        <title>Complete sequence of chromosome 2 of Paracoccus denitrificans PD1222.</title>
        <authorList>
            <person name="Copeland A."/>
            <person name="Lucas S."/>
            <person name="Lapidus A."/>
            <person name="Barry K."/>
            <person name="Detter J.C."/>
            <person name="Glavina del Rio T."/>
            <person name="Hammon N."/>
            <person name="Israni S."/>
            <person name="Dalin E."/>
            <person name="Tice H."/>
            <person name="Pitluck S."/>
            <person name="Munk A.C."/>
            <person name="Brettin T."/>
            <person name="Bruce D."/>
            <person name="Han C."/>
            <person name="Tapia R."/>
            <person name="Gilna P."/>
            <person name="Schmutz J."/>
            <person name="Larimer F."/>
            <person name="Land M."/>
            <person name="Hauser L."/>
            <person name="Kyrpides N."/>
            <person name="Lykidis A."/>
            <person name="Spiro S."/>
            <person name="Richardson D.J."/>
            <person name="Moir J.W.B."/>
            <person name="Ferguson S.J."/>
            <person name="van Spanning R.J.M."/>
            <person name="Richardson P."/>
        </authorList>
    </citation>
    <scope>NUCLEOTIDE SEQUENCE [LARGE SCALE GENOMIC DNA]</scope>
    <source>
        <strain>Pd 1222</strain>
    </source>
</reference>